<gene>
    <name type="primary">PA</name>
</gene>
<comment type="function">
    <text evidence="1 4">Plays a major role in the shutoff of the host protein expression by cleaving mRNAs probably via an endonuclease activity. This host shutoff allows the virus to escape from the host antiviral response (By similarity). Hijacks host RNA splicing machinery to selectively target host RNAs containing introns for destruction. This may explain the preferential degradation of RNAs that have undergone co- or post-transcriptional processing (By similarity).</text>
</comment>
<comment type="subcellular location">
    <subcellularLocation>
        <location evidence="4">Host cytoplasm</location>
    </subcellularLocation>
    <subcellularLocation>
        <location evidence="4">Host nucleus</location>
    </subcellularLocation>
</comment>
<comment type="alternative products">
    <event type="ribosomal frameshifting"/>
    <isoform>
        <id>P0DJV4-1</id>
        <name>PA-X</name>
        <sequence type="displayed"/>
    </isoform>
    <isoform>
        <id>Q6XU35-1</id>
        <name>PA</name>
        <sequence type="external"/>
    </isoform>
</comment>
<comment type="domain">
    <text evidence="1 4">The probable endonuclease active site in the N-terminus and the basic amino acid cluster in the C-terminus are important for the shutoff activity. The C-terminus acts as a nuclear localization signal (By similarity). The C-terminus is recruited to host protein complexes involved in nuclear Pol II RNA processing (By similarity).</text>
</comment>
<comment type="similarity">
    <text evidence="6">Belongs to the influenza viruses PA-X family.</text>
</comment>
<accession>P0DJV4</accession>
<keyword id="KW-1132">Decay of host mRNAs by virus</keyword>
<keyword id="KW-1262">Eukaryotic host gene expression shutoff by virus</keyword>
<keyword id="KW-1035">Host cytoplasm</keyword>
<keyword id="KW-1190">Host gene expression shutoff by virus</keyword>
<keyword id="KW-1192">Host mRNA suppression by virus</keyword>
<keyword id="KW-1048">Host nucleus</keyword>
<keyword id="KW-0945">Host-virus interaction</keyword>
<keyword id="KW-0688">Ribosomal frameshifting</keyword>
<name>PAX_I67A0</name>
<sequence>MEDFVRQCFNPMIVELAEKAMKEYGEDLKIETNKFAAICTHLEVCFMYSDFHFINEQGESIVVELDDPNALLKHRFEIIEGRDRTMAWTVVNSICNTTGAEKPKFLPDLYDYKENRFIEIGVTRREVHIYYLEKANKIKSENTHIHIFSFTGEEMATKADYTLDEESRARIKTRLFTIRQEMANRGLWDSFVSPKEAKKQLKKDLKSQGQCAGLPTKVSRRTSPALRILEPMWMDSNRTATLRASFLKCPKK</sequence>
<protein>
    <recommendedName>
        <fullName>Protein PA-X</fullName>
    </recommendedName>
</protein>
<proteinExistence type="inferred from homology"/>
<organismHost>
    <name type="scientific">Aves</name>
    <dbReference type="NCBI Taxonomy" id="8782"/>
</organismHost>
<organismHost>
    <name type="scientific">Homo sapiens</name>
    <name type="common">Human</name>
    <dbReference type="NCBI Taxonomy" id="9606"/>
</organismHost>
<dbReference type="EMBL" id="AY210006">
    <property type="status" value="NOT_ANNOTATED_CDS"/>
    <property type="molecule type" value="Genomic_RNA"/>
</dbReference>
<dbReference type="SMR" id="P0DJV4"/>
<dbReference type="GO" id="GO:0003723">
    <property type="term" value="F:RNA binding"/>
    <property type="evidence" value="ECO:0007669"/>
    <property type="project" value="InterPro"/>
</dbReference>
<dbReference type="GO" id="GO:0039694">
    <property type="term" value="P:viral RNA genome replication"/>
    <property type="evidence" value="ECO:0007669"/>
    <property type="project" value="InterPro"/>
</dbReference>
<dbReference type="GO" id="GO:0075523">
    <property type="term" value="P:viral translational frameshifting"/>
    <property type="evidence" value="ECO:0007669"/>
    <property type="project" value="UniProtKB-KW"/>
</dbReference>
<dbReference type="FunFam" id="3.40.91.90:FF:000001">
    <property type="entry name" value="Polymerase acidic protein"/>
    <property type="match status" value="1"/>
</dbReference>
<dbReference type="Gene3D" id="3.40.91.90">
    <property type="entry name" value="Influenza RNA-dependent RNA polymerase subunit PA, endonuclease domain"/>
    <property type="match status" value="1"/>
</dbReference>
<dbReference type="InterPro" id="IPR001009">
    <property type="entry name" value="PA/PA-X"/>
</dbReference>
<dbReference type="InterPro" id="IPR038372">
    <property type="entry name" value="PA/PA-X_sf"/>
</dbReference>
<dbReference type="Pfam" id="PF00603">
    <property type="entry name" value="Flu_PA"/>
    <property type="match status" value="1"/>
</dbReference>
<feature type="chain" id="PRO_0000419417" description="Protein PA-X">
    <location>
        <begin position="1"/>
        <end position="252"/>
    </location>
</feature>
<feature type="active site" evidence="2">
    <location>
        <position position="80"/>
    </location>
</feature>
<feature type="active site" evidence="2">
    <location>
        <position position="108"/>
    </location>
</feature>
<feature type="site" description="Important for efficient shutoff activity" evidence="5">
    <location>
        <position position="28"/>
    </location>
</feature>
<feature type="site" description="Important for efficient shutoff activity" evidence="5">
    <location>
        <position position="65"/>
    </location>
</feature>
<feature type="site" description="Important for efficient shutoff activity and nuclear localization" evidence="4">
    <location>
        <position position="195"/>
    </location>
</feature>
<feature type="site" description="Important for efficient shutoff activity and nuclear localization" evidence="4">
    <location>
        <position position="198"/>
    </location>
</feature>
<feature type="site" description="Important for efficient shutoff activity and nuclear localization" evidence="4">
    <location>
        <position position="199"/>
    </location>
</feature>
<feature type="site" description="Important for efficient shutoff activity" evidence="3">
    <location>
        <position position="202"/>
    </location>
</feature>
<feature type="site" description="Important for efficient shutoff activity" evidence="3">
    <location>
        <position position="203"/>
    </location>
</feature>
<feature type="site" description="Important for efficient shutoff activity" evidence="3">
    <location>
        <position position="206"/>
    </location>
</feature>
<reference key="1">
    <citation type="journal article" date="2004" name="Virology">
        <title>Genetic analysis of human H2N2 and early H3N2 influenza viruses, 1957-1972: evidence for genetic divergence and multiple reassortment events.</title>
        <authorList>
            <person name="Lindstrom S.E."/>
            <person name="Cox N.J."/>
            <person name="Klimov A."/>
        </authorList>
    </citation>
    <scope>NUCLEOTIDE SEQUENCE [GENOMIC RNA]</scope>
</reference>
<organism>
    <name type="scientific">Influenza A virus (strain A/Tokyo/3/1967 H2N2)</name>
    <dbReference type="NCBI Taxonomy" id="380960"/>
    <lineage>
        <taxon>Viruses</taxon>
        <taxon>Riboviria</taxon>
        <taxon>Orthornavirae</taxon>
        <taxon>Negarnaviricota</taxon>
        <taxon>Polyploviricotina</taxon>
        <taxon>Insthoviricetes</taxon>
        <taxon>Articulavirales</taxon>
        <taxon>Orthomyxoviridae</taxon>
        <taxon>Alphainfluenzavirus</taxon>
        <taxon>Alphainfluenzavirus influenzae</taxon>
        <taxon>Influenza A virus</taxon>
    </lineage>
</organism>
<evidence type="ECO:0000250" key="1">
    <source>
        <dbReference type="UniProtKB" id="P0CK64"/>
    </source>
</evidence>
<evidence type="ECO:0000250" key="2">
    <source>
        <dbReference type="UniProtKB" id="P0CK68"/>
    </source>
</evidence>
<evidence type="ECO:0000250" key="3">
    <source>
        <dbReference type="UniProtKB" id="P0DJW8"/>
    </source>
</evidence>
<evidence type="ECO:0000250" key="4">
    <source>
        <dbReference type="UniProtKB" id="P0DXO5"/>
    </source>
</evidence>
<evidence type="ECO:0000250" key="5">
    <source>
        <dbReference type="UniProtKB" id="P0DXO6"/>
    </source>
</evidence>
<evidence type="ECO:0000305" key="6"/>